<name>MTM1_RAT</name>
<comment type="function">
    <text evidence="1">Lipid phosphatase which dephosphorylates phosphatidylinositol 3-monophosphate (PI3P) and phosphatidylinositol 3,5-bisphosphate (PI(3,5)P2). Has also been shown to dephosphorylate phosphotyrosine- and phosphoserine-containing peptides. Negatively regulates EGFR degradation through regulation of EGFR trafficking from the late endosome to the lysosome. Plays a role in vacuolar formation and morphology. Regulates desmin intermediate filament assembly and architecture. Plays a role in mitochondrial morphology and positioning. Required for skeletal muscle maintenance but not for myogenesis. In skeletal muscles, stabilizes MTMR12 protein levels.</text>
</comment>
<comment type="catalytic activity">
    <reaction evidence="1">
        <text>a 1,2-diacyl-sn-glycero-3-phospho-(1D-myo-inositol-3-phosphate) + H2O = a 1,2-diacyl-sn-glycero-3-phospho-(1D-myo-inositol) + phosphate</text>
        <dbReference type="Rhea" id="RHEA:12316"/>
        <dbReference type="ChEBI" id="CHEBI:15377"/>
        <dbReference type="ChEBI" id="CHEBI:43474"/>
        <dbReference type="ChEBI" id="CHEBI:57880"/>
        <dbReference type="ChEBI" id="CHEBI:58088"/>
    </reaction>
</comment>
<comment type="catalytic activity">
    <reaction evidence="1">
        <text>a 1,2-diacyl-sn-glycero-3-phospho-(1D-myo-inositol-3,5-bisphosphate) + H2O = a 1,2-diacyl-sn-glycero-3-phospho-(1D-myo-inositol-5-phosphate) + phosphate</text>
        <dbReference type="Rhea" id="RHEA:39019"/>
        <dbReference type="ChEBI" id="CHEBI:15377"/>
        <dbReference type="ChEBI" id="CHEBI:43474"/>
        <dbReference type="ChEBI" id="CHEBI:57795"/>
        <dbReference type="ChEBI" id="CHEBI:57923"/>
        <dbReference type="EC" id="3.1.3.95"/>
    </reaction>
</comment>
<comment type="catalytic activity">
    <reaction evidence="1">
        <text>1,2-dioctanoyl-sn-glycero-3-phospho-(1-D-myo-inositol-3-phosphate) + H2O = 1,2-dioctanoyl-sn-glycero-3-phospho-(1D-myo-inositol) + phosphate</text>
        <dbReference type="Rhea" id="RHEA:42328"/>
        <dbReference type="ChEBI" id="CHEBI:15377"/>
        <dbReference type="ChEBI" id="CHEBI:43474"/>
        <dbReference type="ChEBI" id="CHEBI:65221"/>
        <dbReference type="ChEBI" id="CHEBI:78934"/>
    </reaction>
</comment>
<comment type="catalytic activity">
    <reaction evidence="1">
        <text>1,2-dioctanoyl-sn-glycero-3-phospho-(1D-myo-inositol-3,5-bisphosphate) + H2O = 1,2-dioctanoyl-sn-glycero-3-phospho-(1D-myo-inositol-5-phosphate) + phosphate</text>
        <dbReference type="Rhea" id="RHEA:45632"/>
        <dbReference type="ChEBI" id="CHEBI:15377"/>
        <dbReference type="ChEBI" id="CHEBI:43474"/>
        <dbReference type="ChEBI" id="CHEBI:78911"/>
        <dbReference type="ChEBI" id="CHEBI:85342"/>
    </reaction>
</comment>
<comment type="catalytic activity">
    <reaction evidence="1">
        <text>1,2-dihexadecanoyl-sn-glycero-3-phospho-(1D-myo-inositol-3,5-phosphate) + H2O = 1,2-dihexadecanoyl-sn-glycero-3-phospho-(1D-myo-inositol-5-phosphate) + phosphate</text>
        <dbReference type="Rhea" id="RHEA:45636"/>
        <dbReference type="ChEBI" id="CHEBI:15377"/>
        <dbReference type="ChEBI" id="CHEBI:43474"/>
        <dbReference type="ChEBI" id="CHEBI:78994"/>
        <dbReference type="ChEBI" id="CHEBI:84968"/>
    </reaction>
</comment>
<comment type="activity regulation">
    <text evidence="1">Allosterically activated by phosphatidylinositol 5-phosphate (PI5P).</text>
</comment>
<comment type="subunit">
    <text evidence="1">Heterodimer with MTMR12. Interacts with KMT2A/MLL1 (via SET domain). Interacts with DES in skeletal muscle but not in cardiac muscle. Interacts with SPEG.</text>
</comment>
<comment type="subcellular location">
    <subcellularLocation>
        <location evidence="1">Cytoplasm</location>
    </subcellularLocation>
    <subcellularLocation>
        <location evidence="1">Cell membrane</location>
        <topology evidence="1">Peripheral membrane protein</topology>
    </subcellularLocation>
    <subcellularLocation>
        <location evidence="1">Cell projection</location>
        <location evidence="1">Filopodium</location>
    </subcellularLocation>
    <subcellularLocation>
        <location evidence="1">Cell projection</location>
        <location evidence="1">Ruffle</location>
    </subcellularLocation>
    <subcellularLocation>
        <location evidence="1">Late endosome</location>
    </subcellularLocation>
    <subcellularLocation>
        <location evidence="3">Cytoplasm</location>
        <location evidence="3">Myofibril</location>
        <location evidence="3">Sarcomere</location>
    </subcellularLocation>
    <text evidence="1 3">Localizes as a dense cytoplasmic network. Also localizes to the plasma membrane, including plasma membrane extensions such as filopodia and ruffles. Predominantly located in the cytoplasm following interaction with MTMR12. Recruited to the late endosome following EGF stimulation (By similarity). In skeletal muscles, co-localizes with MTMR12 in the sarcomere (By similarity).</text>
</comment>
<comment type="alternative products">
    <event type="alternative splicing"/>
    <isoform>
        <id>Q6AXQ4-1</id>
        <name>1</name>
        <sequence type="displayed"/>
    </isoform>
    <isoform>
        <id>Q6AXQ4-2</id>
        <name>2</name>
        <sequence type="described" ref="VSP_032751"/>
    </isoform>
</comment>
<comment type="domain">
    <text evidence="1">The GRAM domain mediates binding to PI(3,5)P2 and, with lower affinity, to other phosphoinositides.</text>
</comment>
<comment type="similarity">
    <text evidence="8">Belongs to the protein-tyrosine phosphatase family. Non-receptor class myotubularin subfamily.</text>
</comment>
<comment type="sequence caution" evidence="8">
    <conflict type="erroneous initiation">
        <sequence resource="EMBL-CDS" id="AAH79400"/>
    </conflict>
    <text>Extended N-terminus.</text>
</comment>
<comment type="sequence caution" evidence="8">
    <conflict type="erroneous termination">
        <sequence resource="EMBL-CDS" id="AAH91225"/>
    </conflict>
    <text>Truncated C-terminus.</text>
</comment>
<dbReference type="EC" id="3.1.3.95" evidence="1"/>
<dbReference type="EMBL" id="BC079400">
    <property type="protein sequence ID" value="AAH79400.1"/>
    <property type="status" value="ALT_INIT"/>
    <property type="molecule type" value="mRNA"/>
</dbReference>
<dbReference type="EMBL" id="BC091225">
    <property type="protein sequence ID" value="AAH91225.1"/>
    <property type="status" value="ALT_SEQ"/>
    <property type="molecule type" value="mRNA"/>
</dbReference>
<dbReference type="RefSeq" id="NP_001013065.2">
    <molecule id="Q6AXQ4-2"/>
    <property type="nucleotide sequence ID" value="NM_001013047.2"/>
</dbReference>
<dbReference type="RefSeq" id="NP_001386222.1">
    <molecule id="Q6AXQ4-1"/>
    <property type="nucleotide sequence ID" value="NM_001399293.1"/>
</dbReference>
<dbReference type="SMR" id="Q6AXQ4"/>
<dbReference type="FunCoup" id="Q6AXQ4">
    <property type="interactions" value="1214"/>
</dbReference>
<dbReference type="STRING" id="10116.ENSRNOP00000058761"/>
<dbReference type="iPTMnet" id="Q6AXQ4"/>
<dbReference type="PhosphoSitePlus" id="Q6AXQ4"/>
<dbReference type="PaxDb" id="10116-ENSRNOP00000058761"/>
<dbReference type="Ensembl" id="ENSRNOT00000062057.5">
    <molecule id="Q6AXQ4-2"/>
    <property type="protein sequence ID" value="ENSRNOP00000058761.5"/>
    <property type="gene ID" value="ENSRNOG00000002516.8"/>
</dbReference>
<dbReference type="GeneID" id="288762"/>
<dbReference type="KEGG" id="rno:288762"/>
<dbReference type="UCSC" id="RGD:1304582">
    <molecule id="Q6AXQ4-1"/>
    <property type="organism name" value="rat"/>
</dbReference>
<dbReference type="AGR" id="RGD:1304582"/>
<dbReference type="CTD" id="4534"/>
<dbReference type="RGD" id="1304582">
    <property type="gene designation" value="Mtm1"/>
</dbReference>
<dbReference type="eggNOG" id="KOG4471">
    <property type="taxonomic scope" value="Eukaryota"/>
</dbReference>
<dbReference type="GeneTree" id="ENSGT00940000157029"/>
<dbReference type="HOGENOM" id="CLU_001839_4_1_1"/>
<dbReference type="InParanoid" id="Q6AXQ4"/>
<dbReference type="PhylomeDB" id="Q6AXQ4"/>
<dbReference type="Reactome" id="R-RNO-1660499">
    <property type="pathway name" value="Synthesis of PIPs at the plasma membrane"/>
</dbReference>
<dbReference type="Reactome" id="R-RNO-1660516">
    <property type="pathway name" value="Synthesis of PIPs at the early endosome membrane"/>
</dbReference>
<dbReference type="Reactome" id="R-RNO-1660517">
    <property type="pathway name" value="Synthesis of PIPs at the late endosome membrane"/>
</dbReference>
<dbReference type="PRO" id="PR:Q6AXQ4"/>
<dbReference type="Proteomes" id="UP000002494">
    <property type="component" value="Chromosome 6"/>
</dbReference>
<dbReference type="GO" id="GO:0005737">
    <property type="term" value="C:cytoplasm"/>
    <property type="evidence" value="ECO:0000250"/>
    <property type="project" value="UniProtKB"/>
</dbReference>
<dbReference type="GO" id="GO:0030175">
    <property type="term" value="C:filopodium"/>
    <property type="evidence" value="ECO:0000250"/>
    <property type="project" value="UniProtKB"/>
</dbReference>
<dbReference type="GO" id="GO:0031674">
    <property type="term" value="C:I band"/>
    <property type="evidence" value="ECO:0000266"/>
    <property type="project" value="RGD"/>
</dbReference>
<dbReference type="GO" id="GO:0005770">
    <property type="term" value="C:late endosome"/>
    <property type="evidence" value="ECO:0000250"/>
    <property type="project" value="UniProtKB"/>
</dbReference>
<dbReference type="GO" id="GO:0016020">
    <property type="term" value="C:membrane"/>
    <property type="evidence" value="ECO:0000318"/>
    <property type="project" value="GO_Central"/>
</dbReference>
<dbReference type="GO" id="GO:0005886">
    <property type="term" value="C:plasma membrane"/>
    <property type="evidence" value="ECO:0000250"/>
    <property type="project" value="UniProtKB"/>
</dbReference>
<dbReference type="GO" id="GO:0001726">
    <property type="term" value="C:ruffle"/>
    <property type="evidence" value="ECO:0000250"/>
    <property type="project" value="UniProtKB"/>
</dbReference>
<dbReference type="GO" id="GO:0019215">
    <property type="term" value="F:intermediate filament binding"/>
    <property type="evidence" value="ECO:0000250"/>
    <property type="project" value="UniProtKB"/>
</dbReference>
<dbReference type="GO" id="GO:0035091">
    <property type="term" value="F:phosphatidylinositol binding"/>
    <property type="evidence" value="ECO:0000250"/>
    <property type="project" value="UniProtKB"/>
</dbReference>
<dbReference type="GO" id="GO:0052629">
    <property type="term" value="F:phosphatidylinositol-3,5-bisphosphate 3-phosphatase activity"/>
    <property type="evidence" value="ECO:0000250"/>
    <property type="project" value="UniProtKB"/>
</dbReference>
<dbReference type="GO" id="GO:0004438">
    <property type="term" value="F:phosphatidylinositol-3-phosphate phosphatase activity"/>
    <property type="evidence" value="ECO:0000250"/>
    <property type="project" value="UniProtKB"/>
</dbReference>
<dbReference type="GO" id="GO:0004721">
    <property type="term" value="F:phosphoprotein phosphatase activity"/>
    <property type="evidence" value="ECO:0000250"/>
    <property type="project" value="UniProtKB"/>
</dbReference>
<dbReference type="GO" id="GO:0000045">
    <property type="term" value="P:autophagosome assembly"/>
    <property type="evidence" value="ECO:0000266"/>
    <property type="project" value="RGD"/>
</dbReference>
<dbReference type="GO" id="GO:0008333">
    <property type="term" value="P:endosome to lysosome transport"/>
    <property type="evidence" value="ECO:0000250"/>
    <property type="project" value="UniProtKB"/>
</dbReference>
<dbReference type="GO" id="GO:0045109">
    <property type="term" value="P:intermediate filament organization"/>
    <property type="evidence" value="ECO:0000250"/>
    <property type="project" value="UniProtKB"/>
</dbReference>
<dbReference type="GO" id="GO:0048311">
    <property type="term" value="P:mitochondrion distribution"/>
    <property type="evidence" value="ECO:0000250"/>
    <property type="project" value="UniProtKB"/>
</dbReference>
<dbReference type="GO" id="GO:0007005">
    <property type="term" value="P:mitochondrion organization"/>
    <property type="evidence" value="ECO:0000250"/>
    <property type="project" value="UniProtKB"/>
</dbReference>
<dbReference type="GO" id="GO:0046716">
    <property type="term" value="P:muscle cell cellular homeostasis"/>
    <property type="evidence" value="ECO:0000266"/>
    <property type="project" value="RGD"/>
</dbReference>
<dbReference type="GO" id="GO:1902902">
    <property type="term" value="P:negative regulation of autophagosome assembly"/>
    <property type="evidence" value="ECO:0000266"/>
    <property type="project" value="RGD"/>
</dbReference>
<dbReference type="GO" id="GO:0051898">
    <property type="term" value="P:negative regulation of phosphatidylinositol 3-kinase/protein kinase B signal transduction"/>
    <property type="evidence" value="ECO:0000266"/>
    <property type="project" value="RGD"/>
</dbReference>
<dbReference type="GO" id="GO:0032435">
    <property type="term" value="P:negative regulation of proteasomal ubiquitin-dependent protein catabolic process"/>
    <property type="evidence" value="ECO:0000266"/>
    <property type="project" value="RGD"/>
</dbReference>
<dbReference type="GO" id="GO:0032007">
    <property type="term" value="P:negative regulation of TOR signaling"/>
    <property type="evidence" value="ECO:0000266"/>
    <property type="project" value="RGD"/>
</dbReference>
<dbReference type="GO" id="GO:0043491">
    <property type="term" value="P:phosphatidylinositol 3-kinase/protein kinase B signal transduction"/>
    <property type="evidence" value="ECO:0000266"/>
    <property type="project" value="RGD"/>
</dbReference>
<dbReference type="GO" id="GO:0046856">
    <property type="term" value="P:phosphatidylinositol dephosphorylation"/>
    <property type="evidence" value="ECO:0000250"/>
    <property type="project" value="UniProtKB"/>
</dbReference>
<dbReference type="GO" id="GO:0048633">
    <property type="term" value="P:positive regulation of skeletal muscle tissue growth"/>
    <property type="evidence" value="ECO:0000266"/>
    <property type="project" value="RGD"/>
</dbReference>
<dbReference type="GO" id="GO:0043161">
    <property type="term" value="P:proteasome-mediated ubiquitin-dependent protein catabolic process"/>
    <property type="evidence" value="ECO:0000266"/>
    <property type="project" value="RGD"/>
</dbReference>
<dbReference type="GO" id="GO:0006470">
    <property type="term" value="P:protein dephosphorylation"/>
    <property type="evidence" value="ECO:0000250"/>
    <property type="project" value="UniProtKB"/>
</dbReference>
<dbReference type="GO" id="GO:0015031">
    <property type="term" value="P:protein transport"/>
    <property type="evidence" value="ECO:0007669"/>
    <property type="project" value="UniProtKB-KW"/>
</dbReference>
<dbReference type="GO" id="GO:0044088">
    <property type="term" value="P:regulation of vacuole organization"/>
    <property type="evidence" value="ECO:0000250"/>
    <property type="project" value="UniProtKB"/>
</dbReference>
<dbReference type="GO" id="GO:0048630">
    <property type="term" value="P:skeletal muscle tissue growth"/>
    <property type="evidence" value="ECO:0000266"/>
    <property type="project" value="RGD"/>
</dbReference>
<dbReference type="GO" id="GO:0031929">
    <property type="term" value="P:TOR signaling"/>
    <property type="evidence" value="ECO:0000266"/>
    <property type="project" value="RGD"/>
</dbReference>
<dbReference type="FunFam" id="2.30.29.30:FF:000038">
    <property type="entry name" value="Myotubularin 1, isoform CRA_a"/>
    <property type="match status" value="1"/>
</dbReference>
<dbReference type="Gene3D" id="2.30.29.30">
    <property type="entry name" value="Pleckstrin-homology domain (PH domain)/Phosphotyrosine-binding domain (PTB)"/>
    <property type="match status" value="1"/>
</dbReference>
<dbReference type="InterPro" id="IPR004182">
    <property type="entry name" value="GRAM"/>
</dbReference>
<dbReference type="InterPro" id="IPR030564">
    <property type="entry name" value="Myotubularin"/>
</dbReference>
<dbReference type="InterPro" id="IPR010569">
    <property type="entry name" value="Myotubularin-like_Pase_dom"/>
</dbReference>
<dbReference type="InterPro" id="IPR011993">
    <property type="entry name" value="PH-like_dom_sf"/>
</dbReference>
<dbReference type="InterPro" id="IPR029021">
    <property type="entry name" value="Prot-tyrosine_phosphatase-like"/>
</dbReference>
<dbReference type="InterPro" id="IPR016130">
    <property type="entry name" value="Tyr_Pase_AS"/>
</dbReference>
<dbReference type="InterPro" id="IPR003595">
    <property type="entry name" value="Tyr_Pase_cat"/>
</dbReference>
<dbReference type="PANTHER" id="PTHR10807:SF69">
    <property type="entry name" value="MYOTUBULARIN"/>
    <property type="match status" value="1"/>
</dbReference>
<dbReference type="PANTHER" id="PTHR10807">
    <property type="entry name" value="MYOTUBULARIN-RELATED"/>
    <property type="match status" value="1"/>
</dbReference>
<dbReference type="Pfam" id="PF02893">
    <property type="entry name" value="GRAM"/>
    <property type="match status" value="1"/>
</dbReference>
<dbReference type="Pfam" id="PF06602">
    <property type="entry name" value="Myotub-related"/>
    <property type="match status" value="1"/>
</dbReference>
<dbReference type="SMART" id="SM00568">
    <property type="entry name" value="GRAM"/>
    <property type="match status" value="1"/>
</dbReference>
<dbReference type="SMART" id="SM00404">
    <property type="entry name" value="PTPc_motif"/>
    <property type="match status" value="1"/>
</dbReference>
<dbReference type="SUPFAM" id="SSF52799">
    <property type="entry name" value="(Phosphotyrosine protein) phosphatases II"/>
    <property type="match status" value="1"/>
</dbReference>
<dbReference type="SUPFAM" id="SSF50729">
    <property type="entry name" value="PH domain-like"/>
    <property type="match status" value="1"/>
</dbReference>
<dbReference type="PROSITE" id="PS51339">
    <property type="entry name" value="PPASE_MYOTUBULARIN"/>
    <property type="match status" value="1"/>
</dbReference>
<dbReference type="PROSITE" id="PS00383">
    <property type="entry name" value="TYR_PHOSPHATASE_1"/>
    <property type="match status" value="1"/>
</dbReference>
<reference key="1">
    <citation type="journal article" date="2004" name="Genome Res.">
        <title>The status, quality, and expansion of the NIH full-length cDNA project: the Mammalian Gene Collection (MGC).</title>
        <authorList>
            <consortium name="The MGC Project Team"/>
        </authorList>
    </citation>
    <scope>NUCLEOTIDE SEQUENCE [LARGE SCALE MRNA] (ISOFORMS 1 AND 2)</scope>
    <source>
        <tissue>Kidney</tissue>
        <tissue>Testis</tissue>
    </source>
</reference>
<proteinExistence type="evidence at transcript level"/>
<organism>
    <name type="scientific">Rattus norvegicus</name>
    <name type="common">Rat</name>
    <dbReference type="NCBI Taxonomy" id="10116"/>
    <lineage>
        <taxon>Eukaryota</taxon>
        <taxon>Metazoa</taxon>
        <taxon>Chordata</taxon>
        <taxon>Craniata</taxon>
        <taxon>Vertebrata</taxon>
        <taxon>Euteleostomi</taxon>
        <taxon>Mammalia</taxon>
        <taxon>Eutheria</taxon>
        <taxon>Euarchontoglires</taxon>
        <taxon>Glires</taxon>
        <taxon>Rodentia</taxon>
        <taxon>Myomorpha</taxon>
        <taxon>Muroidea</taxon>
        <taxon>Muridae</taxon>
        <taxon>Murinae</taxon>
        <taxon>Rattus</taxon>
    </lineage>
</organism>
<sequence>MASSSASDCDAHPVERESMRKVSQDGVRQDMSKSGPRLPGESAITDKEVIYICPFSGPVKGRLYITNYRLYLRSLETDLAPILDVPLGVISRIEKMGGVTSRGENSYGLDITCKDLRNLRFALKQEGHSRRDIFDVLTRHAFPLAYNLPLFAFVNEEKFKVDGWAIYNPVEEYRRQGLPDRHWRISFVNQRYELCDTYPALLVVPYRASDDDLRRVATFRSRNRIPVLSWIHPENRAAIMRCSQPLVGVGGKRSRDDERYLDIIRETNKQTSKLTIYDARPGVNAVANKATGGGYEGEDAYPHAELSFLDIHNIHVMRESLRRVRDIVYPHVEEAHWLSSLESTHWLEHIKLLLTGAIRVADKVASGLSSVLVHCSDGWDRTAQLTTLAMLMLDGFYRSIEGFEILVQKEWISFGHKFSSRIGHGDKNHADADRSPIFLQFIDCVWQMTKQFPTAFEFNECFLVAILDHLYSCRFGTFLLNCEAARERQRLAERTVSVWSLINSNKDEFTNPFYARESNRVIYPVTSVRHLELWVNYYIRWNPRIRQQPHPMEQRYNELLALRDDYIKKLEELQLATPTKLTDSSTPPSGSAQIAPRMQTHF</sequence>
<evidence type="ECO:0000250" key="1">
    <source>
        <dbReference type="UniProtKB" id="Q13496"/>
    </source>
</evidence>
<evidence type="ECO:0000250" key="2">
    <source>
        <dbReference type="UniProtKB" id="Q13614"/>
    </source>
</evidence>
<evidence type="ECO:0000250" key="3">
    <source>
        <dbReference type="UniProtKB" id="Q9Z2C5"/>
    </source>
</evidence>
<evidence type="ECO:0000255" key="4">
    <source>
        <dbReference type="PROSITE-ProRule" id="PRU00669"/>
    </source>
</evidence>
<evidence type="ECO:0000255" key="5">
    <source>
        <dbReference type="PROSITE-ProRule" id="PRU10044"/>
    </source>
</evidence>
<evidence type="ECO:0000256" key="6">
    <source>
        <dbReference type="SAM" id="MobiDB-lite"/>
    </source>
</evidence>
<evidence type="ECO:0000303" key="7">
    <source>
    </source>
</evidence>
<evidence type="ECO:0000305" key="8"/>
<evidence type="ECO:0000312" key="9">
    <source>
        <dbReference type="RGD" id="1304582"/>
    </source>
</evidence>
<protein>
    <recommendedName>
        <fullName evidence="1">Myotubularin</fullName>
        <ecNumber evidence="1">3.1.3.95</ecNumber>
    </recommendedName>
    <alternativeName>
        <fullName evidence="1">Phosphatidylinositol-3,5-bisphosphate 3-phosphatase</fullName>
    </alternativeName>
    <alternativeName>
        <fullName evidence="1">Phosphatidylinositol-3-phosphate phosphatase</fullName>
    </alternativeName>
</protein>
<accession>Q6AXQ4</accession>
<accession>Q5BK31</accession>
<keyword id="KW-0025">Alternative splicing</keyword>
<keyword id="KW-1003">Cell membrane</keyword>
<keyword id="KW-0966">Cell projection</keyword>
<keyword id="KW-0963">Cytoplasm</keyword>
<keyword id="KW-0967">Endosome</keyword>
<keyword id="KW-0378">Hydrolase</keyword>
<keyword id="KW-0443">Lipid metabolism</keyword>
<keyword id="KW-0472">Membrane</keyword>
<keyword id="KW-0597">Phosphoprotein</keyword>
<keyword id="KW-0904">Protein phosphatase</keyword>
<keyword id="KW-0653">Protein transport</keyword>
<keyword id="KW-1185">Reference proteome</keyword>
<keyword id="KW-0813">Transport</keyword>
<gene>
    <name evidence="9" type="primary">Mtm1</name>
</gene>
<feature type="chain" id="PRO_0000328657" description="Myotubularin">
    <location>
        <begin position="1"/>
        <end position="602"/>
    </location>
</feature>
<feature type="domain" description="GRAM">
    <location>
        <begin position="28"/>
        <end position="97"/>
    </location>
</feature>
<feature type="domain" description="Myotubularin phosphatase" evidence="4">
    <location>
        <begin position="163"/>
        <end position="538"/>
    </location>
</feature>
<feature type="region of interest" description="Disordered" evidence="6">
    <location>
        <begin position="1"/>
        <end position="40"/>
    </location>
</feature>
<feature type="region of interest" description="Disordered" evidence="6">
    <location>
        <begin position="578"/>
        <end position="602"/>
    </location>
</feature>
<feature type="compositionally biased region" description="Basic and acidic residues" evidence="6">
    <location>
        <begin position="9"/>
        <end position="31"/>
    </location>
</feature>
<feature type="compositionally biased region" description="Polar residues" evidence="6">
    <location>
        <begin position="578"/>
        <end position="592"/>
    </location>
</feature>
<feature type="active site" description="Phosphocysteine intermediate" evidence="5">
    <location>
        <position position="375"/>
    </location>
</feature>
<feature type="binding site" evidence="2">
    <location>
        <position position="288"/>
    </location>
    <ligand>
        <name>a 1,2-diacyl-sn-glycero-3-phospho-(1D-myo-inositol-3,5-bisphosphate)</name>
        <dbReference type="ChEBI" id="CHEBI:57923"/>
    </ligand>
</feature>
<feature type="binding site" evidence="2">
    <location>
        <position position="288"/>
    </location>
    <ligand>
        <name>a 1,2-diacyl-sn-glycero-3-phospho-(1D-myo-inositol-3-phosphate)</name>
        <dbReference type="ChEBI" id="CHEBI:58088"/>
    </ligand>
</feature>
<feature type="binding site" evidence="2">
    <location>
        <position position="313"/>
    </location>
    <ligand>
        <name>a 1,2-diacyl-sn-glycero-3-phospho-(1D-myo-inositol-3,5-bisphosphate)</name>
        <dbReference type="ChEBI" id="CHEBI:57923"/>
    </ligand>
</feature>
<feature type="binding site" evidence="2">
    <location>
        <position position="313"/>
    </location>
    <ligand>
        <name>a 1,2-diacyl-sn-glycero-3-phospho-(1D-myo-inositol-3-phosphate)</name>
        <dbReference type="ChEBI" id="CHEBI:58088"/>
    </ligand>
</feature>
<feature type="binding site" evidence="2">
    <location>
        <position position="314"/>
    </location>
    <ligand>
        <name>a 1,2-diacyl-sn-glycero-3-phospho-(1D-myo-inositol-3,5-bisphosphate)</name>
        <dbReference type="ChEBI" id="CHEBI:57923"/>
    </ligand>
</feature>
<feature type="binding site" evidence="2">
    <location>
        <position position="314"/>
    </location>
    <ligand>
        <name>a 1,2-diacyl-sn-glycero-3-phospho-(1D-myo-inositol-3-phosphate)</name>
        <dbReference type="ChEBI" id="CHEBI:58088"/>
    </ligand>
</feature>
<feature type="binding site" evidence="2">
    <location>
        <position position="376"/>
    </location>
    <ligand>
        <name>a 1,2-diacyl-sn-glycero-3-phospho-(1D-myo-inositol-3,5-bisphosphate)</name>
        <dbReference type="ChEBI" id="CHEBI:57923"/>
    </ligand>
</feature>
<feature type="binding site" evidence="2">
    <location>
        <position position="376"/>
    </location>
    <ligand>
        <name>a 1,2-diacyl-sn-glycero-3-phospho-(1D-myo-inositol-3-phosphate)</name>
        <dbReference type="ChEBI" id="CHEBI:58088"/>
    </ligand>
</feature>
<feature type="binding site" evidence="2">
    <location>
        <position position="377"/>
    </location>
    <ligand>
        <name>a 1,2-diacyl-sn-glycero-3-phospho-(1D-myo-inositol-3,5-bisphosphate)</name>
        <dbReference type="ChEBI" id="CHEBI:57923"/>
    </ligand>
</feature>
<feature type="binding site" evidence="2">
    <location>
        <position position="377"/>
    </location>
    <ligand>
        <name>a 1,2-diacyl-sn-glycero-3-phospho-(1D-myo-inositol-3-phosphate)</name>
        <dbReference type="ChEBI" id="CHEBI:58088"/>
    </ligand>
</feature>
<feature type="binding site" evidence="2">
    <location>
        <position position="378"/>
    </location>
    <ligand>
        <name>a 1,2-diacyl-sn-glycero-3-phospho-(1D-myo-inositol-3,5-bisphosphate)</name>
        <dbReference type="ChEBI" id="CHEBI:57923"/>
    </ligand>
</feature>
<feature type="binding site" evidence="2">
    <location>
        <position position="378"/>
    </location>
    <ligand>
        <name>a 1,2-diacyl-sn-glycero-3-phospho-(1D-myo-inositol-3-phosphate)</name>
        <dbReference type="ChEBI" id="CHEBI:58088"/>
    </ligand>
</feature>
<feature type="binding site" evidence="2">
    <location>
        <position position="379"/>
    </location>
    <ligand>
        <name>a 1,2-diacyl-sn-glycero-3-phospho-(1D-myo-inositol-3,5-bisphosphate)</name>
        <dbReference type="ChEBI" id="CHEBI:57923"/>
    </ligand>
</feature>
<feature type="binding site" evidence="2">
    <location>
        <position position="379"/>
    </location>
    <ligand>
        <name>a 1,2-diacyl-sn-glycero-3-phospho-(1D-myo-inositol-3-phosphate)</name>
        <dbReference type="ChEBI" id="CHEBI:58088"/>
    </ligand>
</feature>
<feature type="binding site" evidence="2">
    <location>
        <position position="380"/>
    </location>
    <ligand>
        <name>a 1,2-diacyl-sn-glycero-3-phospho-(1D-myo-inositol-3,5-bisphosphate)</name>
        <dbReference type="ChEBI" id="CHEBI:57923"/>
    </ligand>
</feature>
<feature type="binding site" evidence="2">
    <location>
        <position position="380"/>
    </location>
    <ligand>
        <name>a 1,2-diacyl-sn-glycero-3-phospho-(1D-myo-inositol-3-phosphate)</name>
        <dbReference type="ChEBI" id="CHEBI:58088"/>
    </ligand>
</feature>
<feature type="binding site" evidence="2">
    <location>
        <position position="381"/>
    </location>
    <ligand>
        <name>a 1,2-diacyl-sn-glycero-3-phospho-(1D-myo-inositol-3,5-bisphosphate)</name>
        <dbReference type="ChEBI" id="CHEBI:57923"/>
    </ligand>
</feature>
<feature type="binding site" evidence="2">
    <location>
        <position position="381"/>
    </location>
    <ligand>
        <name>a 1,2-diacyl-sn-glycero-3-phospho-(1D-myo-inositol-3-phosphate)</name>
        <dbReference type="ChEBI" id="CHEBI:58088"/>
    </ligand>
</feature>
<feature type="binding site" evidence="2">
    <location>
        <position position="417"/>
    </location>
    <ligand>
        <name>a 1,2-diacyl-sn-glycero-3-phospho-(1D-myo-inositol-3,5-bisphosphate)</name>
        <dbReference type="ChEBI" id="CHEBI:57923"/>
    </ligand>
</feature>
<feature type="binding site" evidence="2">
    <location>
        <position position="421"/>
    </location>
    <ligand>
        <name>a 1,2-diacyl-sn-glycero-3-phospho-(1D-myo-inositol-3,5-bisphosphate)</name>
        <dbReference type="ChEBI" id="CHEBI:57923"/>
    </ligand>
</feature>
<feature type="binding site" evidence="2">
    <location>
        <position position="421"/>
    </location>
    <ligand>
        <name>a 1,2-diacyl-sn-glycero-3-phospho-(1D-myo-inositol-3-phosphate)</name>
        <dbReference type="ChEBI" id="CHEBI:58088"/>
    </ligand>
</feature>
<feature type="modified residue" description="Phosphoserine" evidence="1">
    <location>
        <position position="18"/>
    </location>
</feature>
<feature type="modified residue" description="Phosphothreonine" evidence="1">
    <location>
        <position position="495"/>
    </location>
</feature>
<feature type="splice variant" id="VSP_032751" description="In isoform 2." evidence="7">
    <original>R</original>
    <variation>RQ</variation>
    <location>
        <position position="546"/>
    </location>
</feature>